<evidence type="ECO:0000305" key="1"/>
<dbReference type="EMBL" id="U46543">
    <property type="protein sequence ID" value="AAB05223.1"/>
    <property type="molecule type" value="mRNA"/>
</dbReference>
<dbReference type="GO" id="GO:0046872">
    <property type="term" value="F:metal ion binding"/>
    <property type="evidence" value="ECO:0007669"/>
    <property type="project" value="UniProtKB-KW"/>
</dbReference>
<dbReference type="InterPro" id="IPR000347">
    <property type="entry name" value="Metalthion_15p"/>
</dbReference>
<dbReference type="PANTHER" id="PTHR33543">
    <property type="entry name" value="METALLOTHIONEIN-LIKE PROTEIN 2A"/>
    <property type="match status" value="1"/>
</dbReference>
<dbReference type="PANTHER" id="PTHR33543:SF33">
    <property type="entry name" value="METALLOTHIONEIN-LIKE PROTEIN 2B"/>
    <property type="match status" value="1"/>
</dbReference>
<dbReference type="Pfam" id="PF01439">
    <property type="entry name" value="Metallothio_2"/>
    <property type="match status" value="1"/>
</dbReference>
<comment type="function">
    <text>Metallothioneins have a high content of cysteine residues that bind various heavy metals.</text>
</comment>
<comment type="similarity">
    <text evidence="1">Belongs to the metallothionein superfamily. Type 15 family.</text>
</comment>
<organism>
    <name type="scientific">Nicotiana glutinosa</name>
    <name type="common">Tobacco</name>
    <dbReference type="NCBI Taxonomy" id="35889"/>
    <lineage>
        <taxon>Eukaryota</taxon>
        <taxon>Viridiplantae</taxon>
        <taxon>Streptophyta</taxon>
        <taxon>Embryophyta</taxon>
        <taxon>Tracheophyta</taxon>
        <taxon>Spermatophyta</taxon>
        <taxon>Magnoliopsida</taxon>
        <taxon>eudicotyledons</taxon>
        <taxon>Gunneridae</taxon>
        <taxon>Pentapetalae</taxon>
        <taxon>asterids</taxon>
        <taxon>lamiids</taxon>
        <taxon>Solanales</taxon>
        <taxon>Solanaceae</taxon>
        <taxon>Nicotianoideae</taxon>
        <taxon>Nicotianeae</taxon>
        <taxon>Nicotiana</taxon>
    </lineage>
</organism>
<sequence length="78" mass="7869">MSCCGGNCGCGSGCNGCGGCKMYPDLSYNESTTTETLVLGVGHEKTSFGTMEMGESPAAENGCKCGSECKCNPCACSK</sequence>
<protein>
    <recommendedName>
        <fullName>Metallothionein-like protein type 2</fullName>
    </recommendedName>
</protein>
<feature type="chain" id="PRO_0000197405" description="Metallothionein-like protein type 2">
    <location>
        <begin position="1"/>
        <end position="78"/>
    </location>
</feature>
<keyword id="KW-0479">Metal-binding</keyword>
<keyword id="KW-0480">Metal-thiolate cluster</keyword>
<accession>Q40396</accession>
<reference key="1">
    <citation type="submission" date="1996-01" db="EMBL/GenBank/DDBJ databases">
        <authorList>
            <person name="Choi D."/>
            <person name="Kim H.M."/>
            <person name="Yun H.K."/>
            <person name="Yi S.Y."/>
            <person name="Bok S.H."/>
        </authorList>
    </citation>
    <scope>NUCLEOTIDE SEQUENCE [MRNA]</scope>
</reference>
<proteinExistence type="inferred from homology"/>
<name>MT2_NICGU</name>